<name>E4F1_MOUSE</name>
<evidence type="ECO:0000250" key="1"/>
<evidence type="ECO:0000250" key="2">
    <source>
        <dbReference type="UniProtKB" id="Q66K89"/>
    </source>
</evidence>
<evidence type="ECO:0000255" key="3">
    <source>
        <dbReference type="PROSITE-ProRule" id="PRU00042"/>
    </source>
</evidence>
<evidence type="ECO:0000256" key="4">
    <source>
        <dbReference type="SAM" id="MobiDB-lite"/>
    </source>
</evidence>
<evidence type="ECO:0000269" key="5">
    <source>
    </source>
</evidence>
<evidence type="ECO:0000269" key="6">
    <source>
    </source>
</evidence>
<evidence type="ECO:0000269" key="7">
    <source>
    </source>
</evidence>
<evidence type="ECO:0000269" key="8">
    <source>
    </source>
</evidence>
<evidence type="ECO:0000269" key="9">
    <source>
    </source>
</evidence>
<evidence type="ECO:0000269" key="10">
    <source>
    </source>
</evidence>
<evidence type="ECO:0000303" key="11">
    <source>
    </source>
</evidence>
<evidence type="ECO:0000303" key="12">
    <source>
    </source>
</evidence>
<evidence type="ECO:0000305" key="13"/>
<comment type="function">
    <text evidence="5 7 8 9">May function as a transcriptional repressor. May also function as a ubiquitin ligase mediating ubiquitination of chromatin-associated TP53. Functions in cell survival and proliferation through control of the cell cycle. Functions in the p53 and pRB tumor suppressor pathways and regulates the cyclin CCNA2 transcription.</text>
</comment>
<comment type="catalytic activity">
    <reaction evidence="2">
        <text>S-ubiquitinyl-[E2 ubiquitin-conjugating enzyme]-L-cysteine + [acceptor protein]-L-lysine = [E2 ubiquitin-conjugating enzyme]-L-cysteine + N(6)-ubiquitinyl-[acceptor protein]-L-lysine.</text>
        <dbReference type="EC" id="2.3.2.27"/>
    </reaction>
</comment>
<comment type="pathway">
    <text>Protein modification; protein ubiquitination.</text>
</comment>
<comment type="subunit">
    <text evidence="2 5 6 8">Homodimer; binds DNA as a dimer (By similarity). Forms a complex with CDKN2A and TP53. Interacts with HDAC1, HMGA2 and RASSF1 (By similarity). Interactions with TP53, RB1, ANP32A and probably BMI1 and FHL2 regulate E4F1 activity.</text>
</comment>
<comment type="interaction">
    <interactant intactId="EBI-7450874">
        <id>Q8CCE9</id>
    </interactant>
    <interactant intactId="EBI-643140">
        <id>O35381</id>
        <label>Anp32a</label>
    </interactant>
    <organismsDiffer>false</organismsDiffer>
    <experiments>2</experiments>
</comment>
<comment type="subcellular location">
    <subcellularLocation>
        <location evidence="7 9">Nucleus</location>
        <location evidence="7 9">Nucleoplasm</location>
    </subcellularLocation>
    <subcellularLocation>
        <location evidence="1">Cytoplasm</location>
    </subcellularLocation>
    <text evidence="1">A small fraction is detected in the cytoplasm (By similarity). Excluded from the nucleolus where it is targeted upon CDKN2A overexpression. Localizes to the mitotic spindle during embryogenesis.</text>
</comment>
<comment type="alternative products">
    <event type="alternative splicing"/>
    <isoform>
        <id>Q8CCE9-1</id>
        <name>1</name>
        <sequence type="displayed"/>
    </isoform>
    <isoform>
        <id>Q8CCE9-2</id>
        <name>2</name>
        <sequence type="described" ref="VSP_032196 VSP_032197"/>
    </isoform>
    <isoform>
        <id>Q8CCE9-3</id>
        <name>3</name>
        <sequence type="described" ref="VSP_032193"/>
    </isoform>
    <isoform>
        <id>Q8CCE9-4</id>
        <name>4</name>
        <sequence type="described" ref="VSP_032194 VSP_032195"/>
    </isoform>
    <isoform>
        <id>Q8CCE9-5</id>
        <name>5</name>
        <sequence type="described" ref="VSP_032192"/>
    </isoform>
</comment>
<comment type="tissue specificity">
    <text evidence="9 10">Ubiquitously expressed.</text>
</comment>
<comment type="developmental stage">
    <text evidence="10">Continuously expressed during embryogenesis.</text>
</comment>
<comment type="PTM">
    <text evidence="9">Phosphorylated; phosphorylation is cell cycle-dependent and regulates DNA-binding activity and function.</text>
</comment>
<comment type="PTM">
    <text evidence="2">May be sumoylated by UBE2I upon interaction with CDKN2A.</text>
</comment>
<comment type="disruption phenotype">
    <text evidence="7">Death before 7.5 dpc probably at the peri-implantation stage. Blastocysts display defects in mitotic progression and chromosomal segregation and increased apoptosis.</text>
</comment>
<comment type="sequence caution" evidence="13">
    <conflict type="frameshift">
        <sequence resource="EMBL-CDS" id="AAF22563"/>
    </conflict>
</comment>
<comment type="sequence caution" evidence="13">
    <conflict type="frameshift">
        <sequence resource="EMBL-CDS" id="AAH71228"/>
    </conflict>
</comment>
<comment type="sequence caution" evidence="13">
    <conflict type="erroneous initiation">
        <sequence resource="EMBL-CDS" id="BAE25748"/>
    </conflict>
</comment>
<comment type="sequence caution" evidence="13">
    <conflict type="erroneous initiation">
        <sequence resource="EMBL-CDS" id="CAA54188"/>
    </conflict>
</comment>
<reference key="1">
    <citation type="submission" date="1999-02" db="EMBL/GenBank/DDBJ databases">
        <title>Repression of the murine Il-1 beta expression by the murine analog of E4F transcription factor.</title>
        <authorList>
            <person name="Lebedeva T.V."/>
            <person name="Singh A.K."/>
        </authorList>
    </citation>
    <scope>NUCLEOTIDE SEQUENCE [MRNA] (ISOFORM 1)</scope>
</reference>
<reference key="2">
    <citation type="journal article" date="2005" name="Science">
        <title>The transcriptional landscape of the mammalian genome.</title>
        <authorList>
            <person name="Carninci P."/>
            <person name="Kasukawa T."/>
            <person name="Katayama S."/>
            <person name="Gough J."/>
            <person name="Frith M.C."/>
            <person name="Maeda N."/>
            <person name="Oyama R."/>
            <person name="Ravasi T."/>
            <person name="Lenhard B."/>
            <person name="Wells C."/>
            <person name="Kodzius R."/>
            <person name="Shimokawa K."/>
            <person name="Bajic V.B."/>
            <person name="Brenner S.E."/>
            <person name="Batalov S."/>
            <person name="Forrest A.R."/>
            <person name="Zavolan M."/>
            <person name="Davis M.J."/>
            <person name="Wilming L.G."/>
            <person name="Aidinis V."/>
            <person name="Allen J.E."/>
            <person name="Ambesi-Impiombato A."/>
            <person name="Apweiler R."/>
            <person name="Aturaliya R.N."/>
            <person name="Bailey T.L."/>
            <person name="Bansal M."/>
            <person name="Baxter L."/>
            <person name="Beisel K.W."/>
            <person name="Bersano T."/>
            <person name="Bono H."/>
            <person name="Chalk A.M."/>
            <person name="Chiu K.P."/>
            <person name="Choudhary V."/>
            <person name="Christoffels A."/>
            <person name="Clutterbuck D.R."/>
            <person name="Crowe M.L."/>
            <person name="Dalla E."/>
            <person name="Dalrymple B.P."/>
            <person name="de Bono B."/>
            <person name="Della Gatta G."/>
            <person name="di Bernardo D."/>
            <person name="Down T."/>
            <person name="Engstrom P."/>
            <person name="Fagiolini M."/>
            <person name="Faulkner G."/>
            <person name="Fletcher C.F."/>
            <person name="Fukushima T."/>
            <person name="Furuno M."/>
            <person name="Futaki S."/>
            <person name="Gariboldi M."/>
            <person name="Georgii-Hemming P."/>
            <person name="Gingeras T.R."/>
            <person name="Gojobori T."/>
            <person name="Green R.E."/>
            <person name="Gustincich S."/>
            <person name="Harbers M."/>
            <person name="Hayashi Y."/>
            <person name="Hensch T.K."/>
            <person name="Hirokawa N."/>
            <person name="Hill D."/>
            <person name="Huminiecki L."/>
            <person name="Iacono M."/>
            <person name="Ikeo K."/>
            <person name="Iwama A."/>
            <person name="Ishikawa T."/>
            <person name="Jakt M."/>
            <person name="Kanapin A."/>
            <person name="Katoh M."/>
            <person name="Kawasawa Y."/>
            <person name="Kelso J."/>
            <person name="Kitamura H."/>
            <person name="Kitano H."/>
            <person name="Kollias G."/>
            <person name="Krishnan S.P."/>
            <person name="Kruger A."/>
            <person name="Kummerfeld S.K."/>
            <person name="Kurochkin I.V."/>
            <person name="Lareau L.F."/>
            <person name="Lazarevic D."/>
            <person name="Lipovich L."/>
            <person name="Liu J."/>
            <person name="Liuni S."/>
            <person name="McWilliam S."/>
            <person name="Madan Babu M."/>
            <person name="Madera M."/>
            <person name="Marchionni L."/>
            <person name="Matsuda H."/>
            <person name="Matsuzawa S."/>
            <person name="Miki H."/>
            <person name="Mignone F."/>
            <person name="Miyake S."/>
            <person name="Morris K."/>
            <person name="Mottagui-Tabar S."/>
            <person name="Mulder N."/>
            <person name="Nakano N."/>
            <person name="Nakauchi H."/>
            <person name="Ng P."/>
            <person name="Nilsson R."/>
            <person name="Nishiguchi S."/>
            <person name="Nishikawa S."/>
            <person name="Nori F."/>
            <person name="Ohara O."/>
            <person name="Okazaki Y."/>
            <person name="Orlando V."/>
            <person name="Pang K.C."/>
            <person name="Pavan W.J."/>
            <person name="Pavesi G."/>
            <person name="Pesole G."/>
            <person name="Petrovsky N."/>
            <person name="Piazza S."/>
            <person name="Reed J."/>
            <person name="Reid J.F."/>
            <person name="Ring B.Z."/>
            <person name="Ringwald M."/>
            <person name="Rost B."/>
            <person name="Ruan Y."/>
            <person name="Salzberg S.L."/>
            <person name="Sandelin A."/>
            <person name="Schneider C."/>
            <person name="Schoenbach C."/>
            <person name="Sekiguchi K."/>
            <person name="Semple C.A."/>
            <person name="Seno S."/>
            <person name="Sessa L."/>
            <person name="Sheng Y."/>
            <person name="Shibata Y."/>
            <person name="Shimada H."/>
            <person name="Shimada K."/>
            <person name="Silva D."/>
            <person name="Sinclair B."/>
            <person name="Sperling S."/>
            <person name="Stupka E."/>
            <person name="Sugiura K."/>
            <person name="Sultana R."/>
            <person name="Takenaka Y."/>
            <person name="Taki K."/>
            <person name="Tammoja K."/>
            <person name="Tan S.L."/>
            <person name="Tang S."/>
            <person name="Taylor M.S."/>
            <person name="Tegner J."/>
            <person name="Teichmann S.A."/>
            <person name="Ueda H.R."/>
            <person name="van Nimwegen E."/>
            <person name="Verardo R."/>
            <person name="Wei C.L."/>
            <person name="Yagi K."/>
            <person name="Yamanishi H."/>
            <person name="Zabarovsky E."/>
            <person name="Zhu S."/>
            <person name="Zimmer A."/>
            <person name="Hide W."/>
            <person name="Bult C."/>
            <person name="Grimmond S.M."/>
            <person name="Teasdale R.D."/>
            <person name="Liu E.T."/>
            <person name="Brusic V."/>
            <person name="Quackenbush J."/>
            <person name="Wahlestedt C."/>
            <person name="Mattick J.S."/>
            <person name="Hume D.A."/>
            <person name="Kai C."/>
            <person name="Sasaki D."/>
            <person name="Tomaru Y."/>
            <person name="Fukuda S."/>
            <person name="Kanamori-Katayama M."/>
            <person name="Suzuki M."/>
            <person name="Aoki J."/>
            <person name="Arakawa T."/>
            <person name="Iida J."/>
            <person name="Imamura K."/>
            <person name="Itoh M."/>
            <person name="Kato T."/>
            <person name="Kawaji H."/>
            <person name="Kawagashira N."/>
            <person name="Kawashima T."/>
            <person name="Kojima M."/>
            <person name="Kondo S."/>
            <person name="Konno H."/>
            <person name="Nakano K."/>
            <person name="Ninomiya N."/>
            <person name="Nishio T."/>
            <person name="Okada M."/>
            <person name="Plessy C."/>
            <person name="Shibata K."/>
            <person name="Shiraki T."/>
            <person name="Suzuki S."/>
            <person name="Tagami M."/>
            <person name="Waki K."/>
            <person name="Watahiki A."/>
            <person name="Okamura-Oho Y."/>
            <person name="Suzuki H."/>
            <person name="Kawai J."/>
            <person name="Hayashizaki Y."/>
        </authorList>
    </citation>
    <scope>NUCLEOTIDE SEQUENCE [LARGE SCALE MRNA] (ISOFORM 3)</scope>
    <scope>NUCLEOTIDE SEQUENCE [LARGE SCALE MRNA] OF 14-783 (ISOFORM 1)</scope>
    <source>
        <strain>C57BL/6J</strain>
        <tissue>Embryonic testis</tissue>
    </source>
</reference>
<reference key="3">
    <citation type="journal article" date="2004" name="Genome Res.">
        <title>The status, quality, and expansion of the NIH full-length cDNA project: the Mammalian Gene Collection (MGC).</title>
        <authorList>
            <consortium name="The MGC Project Team"/>
        </authorList>
    </citation>
    <scope>NUCLEOTIDE SEQUENCE [LARGE SCALE MRNA] (ISOFORMS 2 AND 4)</scope>
    <scope>NUCLEOTIDE SEQUENCE [LARGE SCALE MRNA] OF 79-783 (ISOFORM 5)</scope>
    <source>
        <strain>C57BL/6J</strain>
        <strain>FVB/N</strain>
        <strain>NMRI</strain>
        <tissue>Brain</tissue>
        <tissue>Mammary tumor</tissue>
    </source>
</reference>
<reference key="4">
    <citation type="journal article" date="1993" name="EMBO J.">
        <title>Repression of adenovirus E1A enhancer activity by a novel zinc finger-containing DNA-binding protein related to the GLI-Kruppel protein.</title>
        <authorList>
            <person name="Fognani C."/>
            <person name="Della Valle G."/>
            <person name="Babiss L.E."/>
        </authorList>
    </citation>
    <scope>NUCLEOTIDE SEQUENCE [MRNA] OF 65-783 (ISOFORM 1)</scope>
    <scope>FUNCTION</scope>
    <scope>DNA-BINDING</scope>
    <scope>SUBCELLULAR LOCATION</scope>
    <scope>PHOSPHORYLATION</scope>
    <scope>TISSUE SPECIFICITY</scope>
    <source>
        <strain>BALB/cJ</strain>
        <tissue>Liver</tissue>
    </source>
</reference>
<reference key="5">
    <citation type="journal article" date="1998" name="Mamm. Genome">
        <title>Chromosomal location and tissue expression of the gene encoding the adenovirus E1A-regulated transcription factor E4F in humans and mice.</title>
        <authorList>
            <person name="Rooney R.J."/>
            <person name="Daniels R.R."/>
            <person name="Jenkins N.A."/>
            <person name="Gilbert D.J."/>
            <person name="Rothammer K."/>
            <person name="Morris S.W."/>
            <person name="Higgs D.R."/>
            <person name="Copeland N.G."/>
        </authorList>
    </citation>
    <scope>TISSUE SPECIFICITY</scope>
    <scope>DEVELOPMENTAL STAGE</scope>
</reference>
<reference key="6">
    <citation type="journal article" date="2000" name="Oncogene">
        <title>p53 is involved in the p120E4F-mediated growth arrest.</title>
        <authorList>
            <person name="Sandy P."/>
            <person name="Gostissa M."/>
            <person name="Fogal V."/>
            <person name="Cecco L.D."/>
            <person name="Szalay K."/>
            <person name="Rooney R.J."/>
            <person name="Schneider C."/>
            <person name="Del Sal G."/>
        </authorList>
    </citation>
    <scope>FUNCTION</scope>
    <scope>INTERACTION WITH TP53</scope>
</reference>
<reference key="7">
    <citation type="journal article" date="2000" name="Proc. Natl. Acad. Sci. U.S.A.">
        <title>pRB binds to and modulates the transrepressing activity of the E1A-regulated transcription factor p120E4F.</title>
        <authorList>
            <person name="Fajas L."/>
            <person name="Paul C."/>
            <person name="Zugasti O."/>
            <person name="Le Cam L."/>
            <person name="Polanowska J."/>
            <person name="Fabbrizio E."/>
            <person name="Medema R."/>
            <person name="Vignais M.-L."/>
            <person name="Sardet C."/>
        </authorList>
    </citation>
    <scope>INTERACTION WITH RB1</scope>
</reference>
<reference key="8">
    <citation type="journal article" date="2004" name="Mol. Cell. Biol.">
        <title>The E4F protein is required for mitotic progression during embryonic cell cycles.</title>
        <authorList>
            <person name="Le Cam L."/>
            <person name="Lacroix M."/>
            <person name="Ciemerych M.A."/>
            <person name="Sardet C."/>
            <person name="Sicinski P."/>
        </authorList>
    </citation>
    <scope>DISRUPTION PHENOTYPE</scope>
    <scope>FUNCTION</scope>
    <scope>SUBCELLULAR LOCATION</scope>
</reference>
<reference key="9">
    <citation type="journal article" date="2007" name="EMBO Rep.">
        <title>The role of LANP and ataxin 1 in E4F-mediated transcriptional repression.</title>
        <authorList>
            <person name="Cvetanovic M."/>
            <person name="Rooney R.J."/>
            <person name="Garcia J.J."/>
            <person name="Toporovskaya N."/>
            <person name="Zoghbi H.Y."/>
            <person name="Opal P."/>
        </authorList>
    </citation>
    <scope>FUNCTION</scope>
    <scope>INTERACTION WITH ANP32A</scope>
</reference>
<sequence length="783" mass="84296">MEGAMAVRVTAAHTAEARAEAGREAGEGGVAAAAALSSGGFLGLPAPFSEEDEDDVHRCGRCQVEFTALEDFVQHKIQKTCHRAPQEALPTTPAATALLDQEVVPTAAEGGPDEPITVAHIVVEATSLAEDISHAPDLVGSGHIKEVIVAAEAEPGDVEMAEAPGSPNHQELGLLGEGEQAHVKLLVNKEGRYVCMLCHKTFKTGSILKAHMVTHSSRKDHECKLCGASFRTKGSLIRHHRRHTDERPYKCAKCGKSFRESGALTRHLKSLTPCTEKIRFSISKDTAVGKEEVPAGSSASTVGTVTSSVAGDPMETSPVIHLVTDAKGTVIHEVHVQMQELPLGMKALTPESPDSEELPCSSENSRENLLHQAMQNSGIVLERVAGEESALEPAPPSGSSPQCLGDGSPELPLLKVEQIETQVASEAATVPRTHPCPQCSETFPTAATLEAHKRGHIAPRPFTCTQCGKAFPKAYLLKKHQEVHVHERRFRCGDCGKLYKTIAHVRGHRRVHSDERPFPCPQCGKRYKTKNAQQVHFRTHLEEKPHVCQFCSRGFREKGSLVRHVRHHTGEKPFKCYKCGRGFAEHGTLNRHLRTKGGCLLEVEELLVSEESPSAAATVLAEDPHTVLVEFSSVVADTQEYIIEATADDTETSEATEIIEGTQTEVDSHIMKVVQQIVHQAGAGHQIIVQNVTMDQETALGSEATAADTITIATPESLTEQVAMTLASAISEGTVLTARAGPNSTEQATVTMVSSEDIEILEHGGELVIASPEGQLEVQTVIV</sequence>
<accession>Q8CCE9</accession>
<accession>Q05BH7</accession>
<accession>Q3UNJ9</accession>
<accession>Q62065</accession>
<accession>Q6IR08</accession>
<accession>Q6PGI1</accession>
<accession>Q9QY56</accession>
<gene>
    <name type="primary">E4f1</name>
</gene>
<organism>
    <name type="scientific">Mus musculus</name>
    <name type="common">Mouse</name>
    <dbReference type="NCBI Taxonomy" id="10090"/>
    <lineage>
        <taxon>Eukaryota</taxon>
        <taxon>Metazoa</taxon>
        <taxon>Chordata</taxon>
        <taxon>Craniata</taxon>
        <taxon>Vertebrata</taxon>
        <taxon>Euteleostomi</taxon>
        <taxon>Mammalia</taxon>
        <taxon>Eutheria</taxon>
        <taxon>Euarchontoglires</taxon>
        <taxon>Glires</taxon>
        <taxon>Rodentia</taxon>
        <taxon>Myomorpha</taxon>
        <taxon>Muroidea</taxon>
        <taxon>Muridae</taxon>
        <taxon>Murinae</taxon>
        <taxon>Mus</taxon>
        <taxon>Mus</taxon>
    </lineage>
</organism>
<dbReference type="EC" id="2.3.2.27" evidence="2"/>
<dbReference type="EMBL" id="AF126967">
    <property type="protein sequence ID" value="AAF22563.1"/>
    <property type="status" value="ALT_FRAME"/>
    <property type="molecule type" value="mRNA"/>
</dbReference>
<dbReference type="EMBL" id="AK033285">
    <property type="protein sequence ID" value="BAC28222.1"/>
    <property type="molecule type" value="mRNA"/>
</dbReference>
<dbReference type="EMBL" id="AK144176">
    <property type="protein sequence ID" value="BAE25748.1"/>
    <property type="status" value="ALT_INIT"/>
    <property type="molecule type" value="mRNA"/>
</dbReference>
<dbReference type="EMBL" id="BC046459">
    <property type="protein sequence ID" value="AAH46459.1"/>
    <property type="molecule type" value="mRNA"/>
</dbReference>
<dbReference type="EMBL" id="BC057011">
    <property type="protein sequence ID" value="AAH57011.1"/>
    <property type="molecule type" value="mRNA"/>
</dbReference>
<dbReference type="EMBL" id="BC071228">
    <property type="protein sequence ID" value="AAH71228.1"/>
    <property type="status" value="ALT_FRAME"/>
    <property type="molecule type" value="mRNA"/>
</dbReference>
<dbReference type="EMBL" id="X76858">
    <property type="protein sequence ID" value="CAA54188.1"/>
    <property type="status" value="ALT_INIT"/>
    <property type="molecule type" value="mRNA"/>
</dbReference>
<dbReference type="CCDS" id="CCDS28481.1">
    <molecule id="Q8CCE9-3"/>
</dbReference>
<dbReference type="PIR" id="S41688">
    <property type="entry name" value="S41688"/>
</dbReference>
<dbReference type="RefSeq" id="NP_001288713.1">
    <molecule id="Q8CCE9-1"/>
    <property type="nucleotide sequence ID" value="NM_001301784.1"/>
</dbReference>
<dbReference type="RefSeq" id="NP_031919.2">
    <molecule id="Q8CCE9-3"/>
    <property type="nucleotide sequence ID" value="NM_007893.4"/>
</dbReference>
<dbReference type="RefSeq" id="XP_011244570.1">
    <property type="nucleotide sequence ID" value="XM_011246268.2"/>
</dbReference>
<dbReference type="SMR" id="Q8CCE9"/>
<dbReference type="BioGRID" id="199353">
    <property type="interactions" value="4"/>
</dbReference>
<dbReference type="FunCoup" id="Q8CCE9">
    <property type="interactions" value="2779"/>
</dbReference>
<dbReference type="IntAct" id="Q8CCE9">
    <property type="interactions" value="3"/>
</dbReference>
<dbReference type="MINT" id="Q8CCE9"/>
<dbReference type="STRING" id="10090.ENSMUSP00000062344"/>
<dbReference type="GlyGen" id="Q8CCE9">
    <property type="glycosylation" value="1 site"/>
</dbReference>
<dbReference type="iPTMnet" id="Q8CCE9"/>
<dbReference type="PhosphoSitePlus" id="Q8CCE9"/>
<dbReference type="PaxDb" id="10090-ENSMUSP00000062344"/>
<dbReference type="ProteomicsDB" id="277705">
    <molecule id="Q8CCE9-1"/>
</dbReference>
<dbReference type="ProteomicsDB" id="277706">
    <molecule id="Q8CCE9-2"/>
</dbReference>
<dbReference type="ProteomicsDB" id="277707">
    <molecule id="Q8CCE9-3"/>
</dbReference>
<dbReference type="ProteomicsDB" id="277708">
    <molecule id="Q8CCE9-4"/>
</dbReference>
<dbReference type="ProteomicsDB" id="277709">
    <molecule id="Q8CCE9-5"/>
</dbReference>
<dbReference type="Antibodypedia" id="23652">
    <property type="antibodies" value="115 antibodies from 19 providers"/>
</dbReference>
<dbReference type="DNASU" id="13560"/>
<dbReference type="Ensembl" id="ENSMUST00000056032.9">
    <molecule id="Q8CCE9-3"/>
    <property type="protein sequence ID" value="ENSMUSP00000062344.8"/>
    <property type="gene ID" value="ENSMUSG00000024137.10"/>
</dbReference>
<dbReference type="Ensembl" id="ENSMUST00000226941.2">
    <molecule id="Q8CCE9-2"/>
    <property type="protein sequence ID" value="ENSMUSP00000154444.2"/>
    <property type="gene ID" value="ENSMUSG00000024137.10"/>
</dbReference>
<dbReference type="GeneID" id="13560"/>
<dbReference type="KEGG" id="mmu:13560"/>
<dbReference type="UCSC" id="uc008avy.2">
    <molecule id="Q8CCE9-3"/>
    <property type="organism name" value="mouse"/>
</dbReference>
<dbReference type="UCSC" id="uc008awa.2">
    <molecule id="Q8CCE9-1"/>
    <property type="organism name" value="mouse"/>
</dbReference>
<dbReference type="UCSC" id="uc008awb.2">
    <molecule id="Q8CCE9-2"/>
    <property type="organism name" value="mouse"/>
</dbReference>
<dbReference type="UCSC" id="uc012ami.2">
    <molecule id="Q8CCE9-5"/>
    <property type="organism name" value="mouse"/>
</dbReference>
<dbReference type="AGR" id="MGI:109530"/>
<dbReference type="CTD" id="1877"/>
<dbReference type="MGI" id="MGI:109530">
    <property type="gene designation" value="E4f1"/>
</dbReference>
<dbReference type="VEuPathDB" id="HostDB:ENSMUSG00000024137"/>
<dbReference type="eggNOG" id="KOG1721">
    <property type="taxonomic scope" value="Eukaryota"/>
</dbReference>
<dbReference type="GeneTree" id="ENSGT00840000129970"/>
<dbReference type="HOGENOM" id="CLU_002678_50_0_1"/>
<dbReference type="InParanoid" id="Q8CCE9"/>
<dbReference type="OMA" id="QDSQNEM"/>
<dbReference type="OrthoDB" id="4748970at2759"/>
<dbReference type="PhylomeDB" id="Q8CCE9"/>
<dbReference type="TreeFam" id="TF315387"/>
<dbReference type="UniPathway" id="UPA00143"/>
<dbReference type="BioGRID-ORCS" id="13560">
    <property type="hits" value="21 hits in 85 CRISPR screens"/>
</dbReference>
<dbReference type="ChiTaRS" id="E4f1">
    <property type="organism name" value="mouse"/>
</dbReference>
<dbReference type="PRO" id="PR:Q8CCE9"/>
<dbReference type="Proteomes" id="UP000000589">
    <property type="component" value="Chromosome 17"/>
</dbReference>
<dbReference type="RNAct" id="Q8CCE9">
    <property type="molecule type" value="protein"/>
</dbReference>
<dbReference type="Bgee" id="ENSMUSG00000024137">
    <property type="expression patterns" value="Expressed in granulocyte and 276 other cell types or tissues"/>
</dbReference>
<dbReference type="ExpressionAtlas" id="Q8CCE9">
    <property type="expression patterns" value="baseline and differential"/>
</dbReference>
<dbReference type="GO" id="GO:0005737">
    <property type="term" value="C:cytoplasm"/>
    <property type="evidence" value="ECO:0007669"/>
    <property type="project" value="UniProtKB-SubCell"/>
</dbReference>
<dbReference type="GO" id="GO:0016604">
    <property type="term" value="C:nuclear body"/>
    <property type="evidence" value="ECO:0007669"/>
    <property type="project" value="Ensembl"/>
</dbReference>
<dbReference type="GO" id="GO:0005634">
    <property type="term" value="C:nucleus"/>
    <property type="evidence" value="ECO:0000314"/>
    <property type="project" value="MGI"/>
</dbReference>
<dbReference type="GO" id="GO:0005819">
    <property type="term" value="C:spindle"/>
    <property type="evidence" value="ECO:0000314"/>
    <property type="project" value="MGI"/>
</dbReference>
<dbReference type="GO" id="GO:0035497">
    <property type="term" value="F:cAMP response element binding"/>
    <property type="evidence" value="ECO:0007669"/>
    <property type="project" value="Ensembl"/>
</dbReference>
<dbReference type="GO" id="GO:0003677">
    <property type="term" value="F:DNA binding"/>
    <property type="evidence" value="ECO:0000314"/>
    <property type="project" value="MGI"/>
</dbReference>
<dbReference type="GO" id="GO:0001228">
    <property type="term" value="F:DNA-binding transcription activator activity, RNA polymerase II-specific"/>
    <property type="evidence" value="ECO:0007669"/>
    <property type="project" value="Ensembl"/>
</dbReference>
<dbReference type="GO" id="GO:0001227">
    <property type="term" value="F:DNA-binding transcription repressor activity, RNA polymerase II-specific"/>
    <property type="evidence" value="ECO:0007669"/>
    <property type="project" value="Ensembl"/>
</dbReference>
<dbReference type="GO" id="GO:0061629">
    <property type="term" value="F:RNA polymerase II-specific DNA-binding transcription factor binding"/>
    <property type="evidence" value="ECO:0007669"/>
    <property type="project" value="Ensembl"/>
</dbReference>
<dbReference type="GO" id="GO:0016740">
    <property type="term" value="F:transferase activity"/>
    <property type="evidence" value="ECO:0007669"/>
    <property type="project" value="UniProtKB-KW"/>
</dbReference>
<dbReference type="GO" id="GO:0008270">
    <property type="term" value="F:zinc ion binding"/>
    <property type="evidence" value="ECO:0007669"/>
    <property type="project" value="UniProtKB-KW"/>
</dbReference>
<dbReference type="GO" id="GO:0051301">
    <property type="term" value="P:cell division"/>
    <property type="evidence" value="ECO:0007669"/>
    <property type="project" value="UniProtKB-KW"/>
</dbReference>
<dbReference type="GO" id="GO:0006260">
    <property type="term" value="P:DNA replication"/>
    <property type="evidence" value="ECO:0000315"/>
    <property type="project" value="MGI"/>
</dbReference>
<dbReference type="GO" id="GO:0045944">
    <property type="term" value="P:positive regulation of transcription by RNA polymerase II"/>
    <property type="evidence" value="ECO:0000314"/>
    <property type="project" value="MGI"/>
</dbReference>
<dbReference type="GO" id="GO:0016567">
    <property type="term" value="P:protein ubiquitination"/>
    <property type="evidence" value="ECO:0007669"/>
    <property type="project" value="UniProtKB-UniPathway"/>
</dbReference>
<dbReference type="GO" id="GO:0010564">
    <property type="term" value="P:regulation of cell cycle process"/>
    <property type="evidence" value="ECO:0000314"/>
    <property type="project" value="UniProtKB"/>
</dbReference>
<dbReference type="GO" id="GO:0006355">
    <property type="term" value="P:regulation of DNA-templated transcription"/>
    <property type="evidence" value="ECO:0000304"/>
    <property type="project" value="MGI"/>
</dbReference>
<dbReference type="GO" id="GO:0009794">
    <property type="term" value="P:regulation of mitotic cell cycle, embryonic"/>
    <property type="evidence" value="ECO:0000315"/>
    <property type="project" value="MGI"/>
</dbReference>
<dbReference type="FunFam" id="3.30.160.60:FF:001804">
    <property type="entry name" value="E4F transcription factor 1"/>
    <property type="match status" value="1"/>
</dbReference>
<dbReference type="FunFam" id="3.30.160.60:FF:001557">
    <property type="entry name" value="Transcription factor E4F1"/>
    <property type="match status" value="1"/>
</dbReference>
<dbReference type="FunFam" id="3.30.160.60:FF:000702">
    <property type="entry name" value="Transcription factor E4F1 isoform 1"/>
    <property type="match status" value="1"/>
</dbReference>
<dbReference type="FunFam" id="3.30.160.60:FF:000715">
    <property type="entry name" value="Transcription factor E4F1 isoform 1"/>
    <property type="match status" value="1"/>
</dbReference>
<dbReference type="FunFam" id="3.30.160.60:FF:002233">
    <property type="entry name" value="transcription factor E4F1 isoform X1"/>
    <property type="match status" value="1"/>
</dbReference>
<dbReference type="FunFam" id="3.30.160.60:FF:001988">
    <property type="entry name" value="transcription factor E4F1 isoform X3"/>
    <property type="match status" value="1"/>
</dbReference>
<dbReference type="Gene3D" id="3.30.160.60">
    <property type="entry name" value="Classic Zinc Finger"/>
    <property type="match status" value="7"/>
</dbReference>
<dbReference type="InterPro" id="IPR036236">
    <property type="entry name" value="Znf_C2H2_sf"/>
</dbReference>
<dbReference type="InterPro" id="IPR013087">
    <property type="entry name" value="Znf_C2H2_type"/>
</dbReference>
<dbReference type="PANTHER" id="PTHR24394">
    <property type="entry name" value="ZINC FINGER PROTEIN"/>
    <property type="match status" value="1"/>
</dbReference>
<dbReference type="PANTHER" id="PTHR24394:SF44">
    <property type="entry name" value="ZINC FINGER PROTEIN 271-LIKE"/>
    <property type="match status" value="1"/>
</dbReference>
<dbReference type="Pfam" id="PF00096">
    <property type="entry name" value="zf-C2H2"/>
    <property type="match status" value="6"/>
</dbReference>
<dbReference type="Pfam" id="PF13912">
    <property type="entry name" value="zf-C2H2_6"/>
    <property type="match status" value="1"/>
</dbReference>
<dbReference type="SMART" id="SM00355">
    <property type="entry name" value="ZnF_C2H2"/>
    <property type="match status" value="10"/>
</dbReference>
<dbReference type="SUPFAM" id="SSF57667">
    <property type="entry name" value="beta-beta-alpha zinc fingers"/>
    <property type="match status" value="6"/>
</dbReference>
<dbReference type="PROSITE" id="PS00028">
    <property type="entry name" value="ZINC_FINGER_C2H2_1"/>
    <property type="match status" value="7"/>
</dbReference>
<dbReference type="PROSITE" id="PS50157">
    <property type="entry name" value="ZINC_FINGER_C2H2_2"/>
    <property type="match status" value="9"/>
</dbReference>
<proteinExistence type="evidence at protein level"/>
<keyword id="KW-0025">Alternative splicing</keyword>
<keyword id="KW-0131">Cell cycle</keyword>
<keyword id="KW-0132">Cell division</keyword>
<keyword id="KW-0963">Cytoplasm</keyword>
<keyword id="KW-0238">DNA-binding</keyword>
<keyword id="KW-0341">Growth regulation</keyword>
<keyword id="KW-0479">Metal-binding</keyword>
<keyword id="KW-0498">Mitosis</keyword>
<keyword id="KW-0539">Nucleus</keyword>
<keyword id="KW-0597">Phosphoprotein</keyword>
<keyword id="KW-1185">Reference proteome</keyword>
<keyword id="KW-0677">Repeat</keyword>
<keyword id="KW-0678">Repressor</keyword>
<keyword id="KW-0804">Transcription</keyword>
<keyword id="KW-0805">Transcription regulation</keyword>
<keyword id="KW-0808">Transferase</keyword>
<keyword id="KW-0832">Ubl conjugation</keyword>
<keyword id="KW-0833">Ubl conjugation pathway</keyword>
<keyword id="KW-0862">Zinc</keyword>
<keyword id="KW-0863">Zinc-finger</keyword>
<feature type="chain" id="PRO_0000324308" description="Transcription factor E4F1">
    <location>
        <begin position="1"/>
        <end position="783"/>
    </location>
</feature>
<feature type="zinc finger region" description="C2H2-type 1" evidence="3">
    <location>
        <begin position="193"/>
        <end position="215"/>
    </location>
</feature>
<feature type="zinc finger region" description="C2H2-type 2" evidence="3">
    <location>
        <begin position="221"/>
        <end position="243"/>
    </location>
</feature>
<feature type="zinc finger region" description="C2H2-type 3; degenerate" evidence="3">
    <location>
        <begin position="249"/>
        <end position="273"/>
    </location>
</feature>
<feature type="zinc finger region" description="C2H2-type 4" evidence="3">
    <location>
        <begin position="434"/>
        <end position="456"/>
    </location>
</feature>
<feature type="zinc finger region" description="C2H2-type 5" evidence="3">
    <location>
        <begin position="462"/>
        <end position="484"/>
    </location>
</feature>
<feature type="zinc finger region" description="C2H2-type 6" evidence="3">
    <location>
        <begin position="490"/>
        <end position="512"/>
    </location>
</feature>
<feature type="zinc finger region" description="C2H2-type 7" evidence="3">
    <location>
        <begin position="518"/>
        <end position="540"/>
    </location>
</feature>
<feature type="zinc finger region" description="C2H2-type 8" evidence="3">
    <location>
        <begin position="546"/>
        <end position="568"/>
    </location>
</feature>
<feature type="zinc finger region" description="C2H2-type 9; degenerate" evidence="3">
    <location>
        <begin position="574"/>
        <end position="596"/>
    </location>
</feature>
<feature type="region of interest" description="Required for ubiquitin ligase activity" evidence="1">
    <location>
        <begin position="40"/>
        <end position="84"/>
    </location>
</feature>
<feature type="region of interest" description="Mediates dimerization, DNA-binding, transcription repression of CCNA2 and interaction with HMGA2" evidence="1">
    <location>
        <begin position="185"/>
        <end position="264"/>
    </location>
</feature>
<feature type="region of interest" description="Mediates interaction with CDKN2A" evidence="1">
    <location>
        <begin position="368"/>
        <end position="565"/>
    </location>
</feature>
<feature type="region of interest" description="Disordered" evidence="4">
    <location>
        <begin position="386"/>
        <end position="407"/>
    </location>
</feature>
<feature type="region of interest" description="Interaction with BMI1" evidence="1">
    <location>
        <begin position="434"/>
        <end position="598"/>
    </location>
</feature>
<feature type="region of interest" description="Mediates interaction with TP53" evidence="1">
    <location>
        <begin position="520"/>
        <end position="579"/>
    </location>
</feature>
<feature type="region of interest" description="Mediates interaction with RASSF1" evidence="1">
    <location>
        <begin position="574"/>
        <end position="596"/>
    </location>
</feature>
<feature type="modified residue" description="Phosphoserine" evidence="2">
    <location>
        <position position="49"/>
    </location>
</feature>
<feature type="splice variant" id="VSP_032192" description="In isoform 5." evidence="11">
    <location>
        <begin position="244"/>
        <end position="274"/>
    </location>
</feature>
<feature type="splice variant" id="VSP_032193" description="In isoform 3." evidence="12">
    <location>
        <position position="422"/>
    </location>
</feature>
<feature type="splice variant" id="VSP_032194" description="In isoform 4." evidence="11">
    <original>A</original>
    <variation>VWQGLPQSLPAQEAPGGARARAPLPLWRLWEALQDHRSCAGPPACSLRREAFPLSPVRQALQNQECPASTLPDTSGRKAPRVPVLQPRLPGEGLSGAACEAPHRRETFQVLQVWPWLRGAWHTQPAPAH</variation>
    <location>
        <position position="458"/>
    </location>
</feature>
<feature type="splice variant" id="VSP_032195" description="In isoform 4." evidence="11">
    <location>
        <begin position="459"/>
        <end position="783"/>
    </location>
</feature>
<feature type="splice variant" id="VSP_032196" description="In isoform 2." evidence="11">
    <original>DSHIMKVVQQIVHQAGAG</original>
    <variation>RVWVRDGRITGLLGSPSG</variation>
    <location>
        <begin position="667"/>
        <end position="684"/>
    </location>
</feature>
<feature type="splice variant" id="VSP_032197" description="In isoform 2." evidence="11">
    <location>
        <begin position="685"/>
        <end position="783"/>
    </location>
</feature>
<feature type="sequence conflict" description="In Ref. 2; BAE25748." evidence="13" ref="2">
    <original>H</original>
    <variation>D</variation>
    <location>
        <position position="13"/>
    </location>
</feature>
<feature type="sequence conflict" description="In Ref. 1; AAF22563, 2; BAE25748 and 3; AAH46459/AAH71228." evidence="13" ref="1 2 3">
    <original>R</original>
    <variation>G</variation>
    <location>
        <position position="18"/>
    </location>
</feature>
<feature type="sequence conflict" description="In Ref. 1; AAF22563 and 2; BAE25748." evidence="13" ref="1 2">
    <original>V</original>
    <variation>VA</variation>
    <location>
        <position position="30"/>
    </location>
</feature>
<feature type="sequence conflict" description="In Ref. 2; BAE25748." evidence="13" ref="2">
    <original>C</original>
    <variation>F</variation>
    <location>
        <position position="62"/>
    </location>
</feature>
<feature type="sequence conflict" description="In Ref. 4; CAA54188." evidence="13" ref="4">
    <original>V</original>
    <variation>A</variation>
    <location>
        <position position="139"/>
    </location>
</feature>
<feature type="sequence conflict" description="In Ref. 4; CAA54188." evidence="13" ref="4">
    <original>I</original>
    <variation>V</variation>
    <location>
        <position position="148"/>
    </location>
</feature>
<feature type="sequence conflict" description="In Ref. 1; AAF22563, 2; BAE25748, 3; AAH46459/AAH71228 and 4; CAA54188." evidence="13" ref="1 2 3 4">
    <original>V</original>
    <variation>G</variation>
    <location>
        <position position="158"/>
    </location>
</feature>
<feature type="sequence conflict" description="In Ref. 1; AAF22563." evidence="13" ref="1">
    <original>KL</original>
    <variation>NF</variation>
    <location>
        <begin position="224"/>
        <end position="225"/>
    </location>
</feature>
<feature type="sequence conflict" description="In Ref. 1; AAF22563 and 2; BAE25748." evidence="13" ref="1 2">
    <original>S</original>
    <variation>N</variation>
    <location>
        <position position="281"/>
    </location>
</feature>
<feature type="sequence conflict" description="In Ref. 1; AAF22563." evidence="13" ref="1">
    <original>V</original>
    <variation>L</variation>
    <location>
        <position position="380"/>
    </location>
</feature>
<feature type="sequence conflict" description="In Ref. 1; AAF22563." evidence="13" ref="1">
    <original>A</original>
    <variation>V</variation>
    <location>
        <position position="390"/>
    </location>
</feature>
<feature type="sequence conflict" description="In Ref. 1; AAF22563." evidence="13" ref="1">
    <original>PPSGSS</original>
    <variation>LPFGST</variation>
    <location>
        <begin position="395"/>
        <end position="400"/>
    </location>
</feature>
<feature type="sequence conflict" description="In Ref. 1; AAF22563." evidence="13" ref="1">
    <original>P</original>
    <variation>L</variation>
    <location>
        <position position="412"/>
    </location>
</feature>
<feature type="sequence conflict" description="In Ref. 4; CAA54188." evidence="13" ref="4">
    <original>KH</original>
    <variation>ND</variation>
    <location>
        <begin position="479"/>
        <end position="480"/>
    </location>
</feature>
<feature type="sequence conflict" description="In Ref. 4; CAA54188." evidence="13" ref="4">
    <original>EH</original>
    <variation>DD</variation>
    <location>
        <begin position="585"/>
        <end position="586"/>
    </location>
</feature>
<feature type="sequence conflict" description="In Ref. 1; AAF22563, 2; BAE25748, 3; AAH46459 and 4; CAA54188." evidence="13" ref="1 2 3 4">
    <original>E</original>
    <variation>Q</variation>
    <location>
        <position position="630"/>
    </location>
</feature>
<feature type="sequence conflict" description="In Ref. 1; AAF22563, 2; BAE25748 and 4; CAA54188." evidence="13" ref="1 2 4">
    <original>T</original>
    <variation>A</variation>
    <location>
        <position position="705"/>
    </location>
</feature>
<protein>
    <recommendedName>
        <fullName>Transcription factor E4F1</fullName>
        <ecNumber evidence="2">2.3.2.27</ecNumber>
    </recommendedName>
    <alternativeName>
        <fullName>E4F transcription factor 1</fullName>
    </alternativeName>
    <alternativeName>
        <fullName>Putative E3 ubiquitin-protein ligase E4F1</fullName>
    </alternativeName>
    <alternativeName>
        <fullName evidence="13">RING-type E3 ubiquitin transferase E4F1</fullName>
    </alternativeName>
    <alternativeName>
        <fullName>Transcription factor E4F</fullName>
    </alternativeName>
    <alternativeName>
        <fullName>Transcription factor phi AP3</fullName>
    </alternativeName>
    <alternativeName>
        <fullName>p120E4F</fullName>
    </alternativeName>
</protein>